<gene>
    <name type="primary">LPXN</name>
    <name type="synonym">LDLP</name>
</gene>
<evidence type="ECO:0000250" key="1"/>
<evidence type="ECO:0000250" key="2">
    <source>
        <dbReference type="UniProtKB" id="Q99N69"/>
    </source>
</evidence>
<evidence type="ECO:0000255" key="3">
    <source>
        <dbReference type="PROSITE-ProRule" id="PRU00125"/>
    </source>
</evidence>
<evidence type="ECO:0000256" key="4">
    <source>
        <dbReference type="SAM" id="MobiDB-lite"/>
    </source>
</evidence>
<evidence type="ECO:0000269" key="5">
    <source>
    </source>
</evidence>
<evidence type="ECO:0000269" key="6">
    <source>
    </source>
</evidence>
<evidence type="ECO:0000269" key="7">
    <source>
    </source>
</evidence>
<evidence type="ECO:0000269" key="8">
    <source>
    </source>
</evidence>
<evidence type="ECO:0000269" key="9">
    <source>
    </source>
</evidence>
<evidence type="ECO:0000269" key="10">
    <source>
    </source>
</evidence>
<evidence type="ECO:0000269" key="11">
    <source>
    </source>
</evidence>
<evidence type="ECO:0000269" key="12">
    <source>
    </source>
</evidence>
<evidence type="ECO:0000303" key="13">
    <source>
    </source>
</evidence>
<evidence type="ECO:0000305" key="14"/>
<evidence type="ECO:0007744" key="15">
    <source>
    </source>
</evidence>
<evidence type="ECO:0007744" key="16">
    <source>
    </source>
</evidence>
<evidence type="ECO:0007744" key="17">
    <source>
    </source>
</evidence>
<evidence type="ECO:0007744" key="18">
    <source>
    </source>
</evidence>
<evidence type="ECO:0007829" key="19">
    <source>
        <dbReference type="PDB" id="1X3H"/>
    </source>
</evidence>
<evidence type="ECO:0007829" key="20">
    <source>
        <dbReference type="PDB" id="4XEF"/>
    </source>
</evidence>
<evidence type="ECO:0007829" key="21">
    <source>
        <dbReference type="PDB" id="4XEK"/>
    </source>
</evidence>
<comment type="function">
    <text evidence="8 9 10 11">Transcriptional coactivator for androgen receptor (AR) and serum response factor (SRF). Contributes to the regulation of cell adhesion, spreading and cell migration and acts as a negative regulator in integrin-mediated cell adhesion events. Suppresses the integrin-induced tyrosine phosphorylation of paxillin (PXN). May play a critical role as an adapter protein in the formation of the adhesion zone in osteoclasts. Negatively regulates B-cell antigen receptor (BCR) signaling.</text>
</comment>
<comment type="subunit">
    <text evidence="1 5 7 8 9 10 12">Interacts with PTPN22 (By similarity). Interacts with unphosphorylated ITGA4. Interacts with PTK2B/PYK2, PTPN12, AR and SRF. Interacts (via LD motif 3) with LYN and the interaction is induced upon B-cell antigen receptor (BCR) activation. Interacts (via LD motif 3) with PTK2/FAK.</text>
</comment>
<comment type="interaction">
    <interactant intactId="EBI-744222">
        <id>O60711</id>
    </interactant>
    <interactant intactId="EBI-727098">
        <id>P21549</id>
        <label>AGXT</label>
    </interactant>
    <organismsDiffer>false</organismsDiffer>
    <experiments>3</experiments>
</comment>
<comment type="interaction">
    <interactant intactId="EBI-744222">
        <id>O60711</id>
    </interactant>
    <interactant intactId="EBI-745213">
        <id>P29972</id>
        <label>AQP1</label>
    </interactant>
    <organismsDiffer>false</organismsDiffer>
    <experiments>3</experiments>
</comment>
<comment type="interaction">
    <interactant intactId="EBI-744222">
        <id>O60711</id>
    </interactant>
    <interactant intactId="EBI-1779423">
        <id>P31274</id>
        <label>HOXC9</label>
    </interactant>
    <organismsDiffer>false</organismsDiffer>
    <experiments>7</experiments>
</comment>
<comment type="interaction">
    <interactant intactId="EBI-744222">
        <id>O60711</id>
    </interactant>
    <interactant intactId="EBI-8639312">
        <id>P25800</id>
        <label>LMO1</label>
    </interactant>
    <organismsDiffer>false</organismsDiffer>
    <experiments>7</experiments>
</comment>
<comment type="interaction">
    <interactant intactId="EBI-744222">
        <id>O60711</id>
    </interactant>
    <interactant intactId="EBI-11742507">
        <id>Q8TAP4-4</id>
        <label>LMO3</label>
    </interactant>
    <organismsDiffer>false</organismsDiffer>
    <experiments>3</experiments>
</comment>
<comment type="interaction">
    <interactant intactId="EBI-744222">
        <id>O60711</id>
    </interactant>
    <interactant intactId="EBI-748974">
        <id>Q96CV9</id>
        <label>OPTN</label>
    </interactant>
    <organismsDiffer>false</organismsDiffer>
    <experiments>3</experiments>
</comment>
<comment type="interaction">
    <interactant intactId="EBI-744222">
        <id>O60711</id>
    </interactant>
    <interactant intactId="EBI-2815745">
        <id>Q8IVE3</id>
        <label>PLEKHH2</label>
    </interactant>
    <organismsDiffer>false</organismsDiffer>
    <experiments>5</experiments>
</comment>
<comment type="interaction">
    <interactant intactId="EBI-744222">
        <id>O60711</id>
    </interactant>
    <interactant intactId="EBI-10241513">
        <id>Q494U1</id>
        <label>PLEKHN1</label>
    </interactant>
    <organismsDiffer>false</organismsDiffer>
    <experiments>3</experiments>
</comment>
<comment type="interaction">
    <interactant intactId="EBI-744222">
        <id>O60711</id>
    </interactant>
    <interactant intactId="EBI-12014286">
        <id>Q494U1-3</id>
        <label>PLEKHN1</label>
    </interactant>
    <organismsDiffer>false</organismsDiffer>
    <experiments>3</experiments>
</comment>
<comment type="interaction">
    <interactant intactId="EBI-744222">
        <id>O60711</id>
    </interactant>
    <interactant intactId="EBI-11956563">
        <id>Q96HA1-2</id>
        <label>POM121</label>
    </interactant>
    <organismsDiffer>false</organismsDiffer>
    <experiments>3</experiments>
</comment>
<comment type="interaction">
    <interactant intactId="EBI-744222">
        <id>O60711</id>
    </interactant>
    <interactant intactId="EBI-702142">
        <id>Q05397</id>
        <label>PTK2</label>
    </interactant>
    <organismsDiffer>false</organismsDiffer>
    <experiments>4</experiments>
</comment>
<comment type="interaction">
    <interactant intactId="EBI-744222">
        <id>O60711</id>
    </interactant>
    <interactant intactId="EBI-11984663">
        <id>Q06455-2</id>
        <label>RUNX1T1</label>
    </interactant>
    <organismsDiffer>false</organismsDiffer>
    <experiments>3</experiments>
</comment>
<comment type="interaction">
    <interactant intactId="EBI-744222">
        <id>O60711</id>
    </interactant>
    <interactant intactId="EBI-10224192">
        <id>Q06455-4</id>
        <label>RUNX1T1</label>
    </interactant>
    <organismsDiffer>false</organismsDiffer>
    <experiments>3</experiments>
</comment>
<comment type="interaction">
    <interactant intactId="EBI-744222">
        <id>O60711</id>
    </interactant>
    <interactant intactId="EBI-779636">
        <id>P01137</id>
        <label>TGFB1</label>
    </interactant>
    <organismsDiffer>false</organismsDiffer>
    <experiments>3</experiments>
</comment>
<comment type="interaction">
    <interactant intactId="EBI-744222">
        <id>O60711</id>
    </interactant>
    <interactant intactId="EBI-949753">
        <id>Q63HR2</id>
        <label>TNS2</label>
    </interactant>
    <organismsDiffer>false</organismsDiffer>
    <experiments>3</experiments>
</comment>
<comment type="interaction">
    <interactant intactId="EBI-744222">
        <id>O60711</id>
    </interactant>
    <interactant intactId="EBI-6116822">
        <id>Q8N3L3</id>
        <label>TXLNB</label>
    </interactant>
    <organismsDiffer>false</organismsDiffer>
    <experiments>3</experiments>
</comment>
<comment type="interaction">
    <interactant intactId="EBI-744222">
        <id>O60711</id>
    </interactant>
    <interactant intactId="EBI-11027067">
        <id>P18206-2</id>
        <label>VCL</label>
    </interactant>
    <organismsDiffer>false</organismsDiffer>
    <experiments>3</experiments>
</comment>
<comment type="interaction">
    <interactant intactId="EBI-744222">
        <id>O60711</id>
    </interactant>
    <interactant intactId="EBI-3957603">
        <id>P09022</id>
        <label>Hoxa1</label>
    </interactant>
    <organismsDiffer>true</organismsDiffer>
    <experiments>3</experiments>
</comment>
<comment type="subcellular location">
    <subcellularLocation>
        <location>Cytoplasm</location>
    </subcellularLocation>
    <subcellularLocation>
        <location>Cell junction</location>
        <location>Focal adhesion</location>
    </subcellularLocation>
    <subcellularLocation>
        <location>Nucleus</location>
    </subcellularLocation>
    <subcellularLocation>
        <location evidence="1">Cytoplasm</location>
        <location evidence="1">Perinuclear region</location>
    </subcellularLocation>
    <subcellularLocation>
        <location>Cell projection</location>
        <location>Podosome</location>
    </subcellularLocation>
    <subcellularLocation>
        <location>Cell membrane</location>
    </subcellularLocation>
    <text>Shuttles between the cytoplasm and nucleus. Recruited to the cell membrane following B-cell antigen receptor (BCR) cross-linking in B-cells. Enhanced focal adhesion kinase activity (PTK2/FAK) attenuates its nuclear accumulation and limits its ability to enhance serum response factor (SRF)-dependent gene transcription. Targeting to focal adhesions is essential for its tyrosine phosphorylation in response to bombesin.</text>
</comment>
<comment type="alternative products">
    <event type="alternative splicing"/>
    <isoform>
        <id>O60711-1</id>
        <name>1</name>
        <sequence type="displayed"/>
    </isoform>
    <isoform>
        <id>O60711-2</id>
        <name>2</name>
        <sequence type="described" ref="VSP_042655"/>
    </isoform>
</comment>
<comment type="tissue specificity">
    <text evidence="6 9 10">Macrophages, monocytes and osteoclasts (at protein level). Strongly expressed in cells and tissues of hematopoietic origin. Highest expression in lymphoid tissues such as spleen, lymph node, thymus and appendix and in the vascular smooth muscle. Lower levels in bone marrow and fetal liver. Also expressed in peripheral blood lymphocytes and a number of hematopoietic cell lines. Very low levels found in epithelial cell lines. Expressed in prostate cancer (PCa) cells and its expression intensity is directly linked to PCa progression.</text>
</comment>
<comment type="domain">
    <text>The LIM domain 3 is critical for focal adhesion targeting and the suppression of paxillin (PXN) tyrosine phosphorylation. The LIM domain 3 alone or both LIM domains 3 and 4 can mediate interaction with AR.</text>
</comment>
<comment type="PTM">
    <text evidence="8 11">Phosphorylated on tyrosine residues. Phosphorylation on Tyr-72 is important for its inhibitory function. Bombesin stimulates phosphorylation on Tyr-22, Tyr-62 and Tyr-72.</text>
</comment>
<comment type="similarity">
    <text evidence="14">Belongs to the paxillin family.</text>
</comment>
<sequence>MEELDALLEELERSTLQDSDEYSNPAPLPLDQHSRKETNLDETSEILSIQDNTSPLPAQLVYTTNIQELNVYSEAQEPKESPPPSKTSAAAQLDELMAHLTEMQAKVAVRADAGKKHLPDKQDHKASLDSMLGGLEQELQDLGIATVPKGHCASCQKPIAGKVIHALGQSWHPEHFVCTHCKEEIGSSPFFERSGLAYCPNDYHQLFSPRCAYCAAPILDKVLTAMNQTWHPEHFFCSHCGEVFGAEGFHEKDKKPYCRKDFLAMFSPKCGGCNRPVLENYLSAMDTVWHPECFVCGDCFTSFSTGSFFELDGRPFCELHYHHRRGTLCHGCGQPITGRCISAMGYKFHPEHFVCAFCLTQLSKGIFREQNDKTYCQPCFNKLFPL</sequence>
<dbReference type="EMBL" id="AF062075">
    <property type="protein sequence ID" value="AAC16014.1"/>
    <property type="molecule type" value="mRNA"/>
</dbReference>
<dbReference type="EMBL" id="AK300955">
    <property type="protein sequence ID" value="BAG62583.1"/>
    <property type="molecule type" value="mRNA"/>
</dbReference>
<dbReference type="EMBL" id="AK313306">
    <property type="protein sequence ID" value="BAG36111.1"/>
    <property type="molecule type" value="mRNA"/>
</dbReference>
<dbReference type="EMBL" id="CR536531">
    <property type="protein sequence ID" value="CAG38768.1"/>
    <property type="molecule type" value="mRNA"/>
</dbReference>
<dbReference type="EMBL" id="AK223165">
    <property type="protein sequence ID" value="BAD96885.1"/>
    <property type="molecule type" value="mRNA"/>
</dbReference>
<dbReference type="EMBL" id="AP001350">
    <property type="status" value="NOT_ANNOTATED_CDS"/>
    <property type="molecule type" value="Genomic_DNA"/>
</dbReference>
<dbReference type="EMBL" id="AP003557">
    <property type="status" value="NOT_ANNOTATED_CDS"/>
    <property type="molecule type" value="Genomic_DNA"/>
</dbReference>
<dbReference type="EMBL" id="CH471076">
    <property type="protein sequence ID" value="EAW73808.1"/>
    <property type="molecule type" value="Genomic_DNA"/>
</dbReference>
<dbReference type="EMBL" id="BC019035">
    <property type="protein sequence ID" value="AAH19035.1"/>
    <property type="molecule type" value="mRNA"/>
</dbReference>
<dbReference type="CCDS" id="CCDS53635.1">
    <molecule id="O60711-2"/>
</dbReference>
<dbReference type="CCDS" id="CCDS7969.1">
    <molecule id="O60711-1"/>
</dbReference>
<dbReference type="RefSeq" id="NP_001137467.1">
    <molecule id="O60711-2"/>
    <property type="nucleotide sequence ID" value="NM_001143995.3"/>
</dbReference>
<dbReference type="RefSeq" id="NP_001294880.1">
    <property type="nucleotide sequence ID" value="NM_001307951.1"/>
</dbReference>
<dbReference type="RefSeq" id="NP_004802.1">
    <molecule id="O60711-1"/>
    <property type="nucleotide sequence ID" value="NM_004811.3"/>
</dbReference>
<dbReference type="PDB" id="1X3H">
    <property type="method" value="NMR"/>
    <property type="chains" value="A=260-326"/>
</dbReference>
<dbReference type="PDB" id="4XEF">
    <property type="method" value="X-ray"/>
    <property type="resolution" value="2.50 A"/>
    <property type="chains" value="B/C/E/F=1-20"/>
</dbReference>
<dbReference type="PDB" id="4XEK">
    <property type="method" value="X-ray"/>
    <property type="resolution" value="1.79 A"/>
    <property type="chains" value="C=86-104"/>
</dbReference>
<dbReference type="PDB" id="4XEV">
    <property type="method" value="X-ray"/>
    <property type="resolution" value="2.01 A"/>
    <property type="chains" value="C/F=86-104"/>
</dbReference>
<dbReference type="PDBsum" id="1X3H"/>
<dbReference type="PDBsum" id="4XEF"/>
<dbReference type="PDBsum" id="4XEK"/>
<dbReference type="PDBsum" id="4XEV"/>
<dbReference type="SMR" id="O60711"/>
<dbReference type="BioGRID" id="114801">
    <property type="interactions" value="66"/>
</dbReference>
<dbReference type="FunCoup" id="O60711">
    <property type="interactions" value="331"/>
</dbReference>
<dbReference type="IntAct" id="O60711">
    <property type="interactions" value="72"/>
</dbReference>
<dbReference type="MINT" id="O60711"/>
<dbReference type="STRING" id="9606.ENSP00000431284"/>
<dbReference type="iPTMnet" id="O60711"/>
<dbReference type="PhosphoSitePlus" id="O60711"/>
<dbReference type="BioMuta" id="LPXN"/>
<dbReference type="jPOST" id="O60711"/>
<dbReference type="MassIVE" id="O60711"/>
<dbReference type="PaxDb" id="9606-ENSP00000431284"/>
<dbReference type="PeptideAtlas" id="O60711"/>
<dbReference type="ProteomicsDB" id="49535">
    <molecule id="O60711-1"/>
</dbReference>
<dbReference type="ProteomicsDB" id="49536">
    <molecule id="O60711-2"/>
</dbReference>
<dbReference type="Pumba" id="O60711"/>
<dbReference type="Antibodypedia" id="27661">
    <property type="antibodies" value="173 antibodies from 24 providers"/>
</dbReference>
<dbReference type="DNASU" id="9404"/>
<dbReference type="Ensembl" id="ENST00000395074.7">
    <molecule id="O60711-1"/>
    <property type="protein sequence ID" value="ENSP00000378512.2"/>
    <property type="gene ID" value="ENSG00000110031.13"/>
</dbReference>
<dbReference type="Ensembl" id="ENST00000528954.5">
    <molecule id="O60711-2"/>
    <property type="protein sequence ID" value="ENSP00000431284.1"/>
    <property type="gene ID" value="ENSG00000110031.13"/>
</dbReference>
<dbReference type="GeneID" id="9404"/>
<dbReference type="KEGG" id="hsa:9404"/>
<dbReference type="MANE-Select" id="ENST00000395074.7">
    <property type="protein sequence ID" value="ENSP00000378512.2"/>
    <property type="RefSeq nucleotide sequence ID" value="NM_004811.3"/>
    <property type="RefSeq protein sequence ID" value="NP_004802.1"/>
</dbReference>
<dbReference type="UCSC" id="uc001nmw.4">
    <molecule id="O60711-1"/>
    <property type="organism name" value="human"/>
</dbReference>
<dbReference type="AGR" id="HGNC:14061"/>
<dbReference type="CTD" id="9404"/>
<dbReference type="DisGeNET" id="9404"/>
<dbReference type="GeneCards" id="LPXN"/>
<dbReference type="HGNC" id="HGNC:14061">
    <property type="gene designation" value="LPXN"/>
</dbReference>
<dbReference type="HPA" id="ENSG00000110031">
    <property type="expression patterns" value="Tissue enhanced (lymphoid)"/>
</dbReference>
<dbReference type="MIM" id="605390">
    <property type="type" value="gene"/>
</dbReference>
<dbReference type="neXtProt" id="NX_O60711"/>
<dbReference type="OpenTargets" id="ENSG00000110031"/>
<dbReference type="PharmGKB" id="PA30441"/>
<dbReference type="VEuPathDB" id="HostDB:ENSG00000110031"/>
<dbReference type="eggNOG" id="KOG1703">
    <property type="taxonomic scope" value="Eukaryota"/>
</dbReference>
<dbReference type="GeneTree" id="ENSGT00940000160259"/>
<dbReference type="HOGENOM" id="CLU_001357_1_1_1"/>
<dbReference type="InParanoid" id="O60711"/>
<dbReference type="OMA" id="YCQPCFT"/>
<dbReference type="OrthoDB" id="15567at2759"/>
<dbReference type="PAN-GO" id="O60711">
    <property type="GO annotations" value="8 GO annotations based on evolutionary models"/>
</dbReference>
<dbReference type="PhylomeDB" id="O60711"/>
<dbReference type="TreeFam" id="TF314113"/>
<dbReference type="PathwayCommons" id="O60711"/>
<dbReference type="SignaLink" id="O60711"/>
<dbReference type="SIGNOR" id="O60711"/>
<dbReference type="BioGRID-ORCS" id="9404">
    <property type="hits" value="13 hits in 1156 CRISPR screens"/>
</dbReference>
<dbReference type="ChiTaRS" id="LPXN">
    <property type="organism name" value="human"/>
</dbReference>
<dbReference type="EvolutionaryTrace" id="O60711"/>
<dbReference type="GeneWiki" id="LPXN"/>
<dbReference type="GenomeRNAi" id="9404"/>
<dbReference type="Pharos" id="O60711">
    <property type="development level" value="Tbio"/>
</dbReference>
<dbReference type="PRO" id="PR:O60711"/>
<dbReference type="Proteomes" id="UP000005640">
    <property type="component" value="Chromosome 11"/>
</dbReference>
<dbReference type="RNAct" id="O60711">
    <property type="molecule type" value="protein"/>
</dbReference>
<dbReference type="Bgee" id="ENSG00000110031">
    <property type="expression patterns" value="Expressed in granulocyte and 160 other cell types or tissues"/>
</dbReference>
<dbReference type="ExpressionAtlas" id="O60711">
    <property type="expression patterns" value="baseline and differential"/>
</dbReference>
<dbReference type="GO" id="GO:0042995">
    <property type="term" value="C:cell projection"/>
    <property type="evidence" value="ECO:0007669"/>
    <property type="project" value="UniProtKB-KW"/>
</dbReference>
<dbReference type="GO" id="GO:0005737">
    <property type="term" value="C:cytoplasm"/>
    <property type="evidence" value="ECO:0000314"/>
    <property type="project" value="UniProtKB"/>
</dbReference>
<dbReference type="GO" id="GO:0005829">
    <property type="term" value="C:cytosol"/>
    <property type="evidence" value="ECO:0000314"/>
    <property type="project" value="HPA"/>
</dbReference>
<dbReference type="GO" id="GO:0005925">
    <property type="term" value="C:focal adhesion"/>
    <property type="evidence" value="ECO:0000314"/>
    <property type="project" value="HPA"/>
</dbReference>
<dbReference type="GO" id="GO:0016020">
    <property type="term" value="C:membrane"/>
    <property type="evidence" value="ECO:0007005"/>
    <property type="project" value="UniProtKB"/>
</dbReference>
<dbReference type="GO" id="GO:0016607">
    <property type="term" value="C:nuclear speck"/>
    <property type="evidence" value="ECO:0000314"/>
    <property type="project" value="HPA"/>
</dbReference>
<dbReference type="GO" id="GO:0005634">
    <property type="term" value="C:nucleus"/>
    <property type="evidence" value="ECO:0000314"/>
    <property type="project" value="UniProtKB"/>
</dbReference>
<dbReference type="GO" id="GO:0048471">
    <property type="term" value="C:perinuclear region of cytoplasm"/>
    <property type="evidence" value="ECO:0007669"/>
    <property type="project" value="UniProtKB-SubCell"/>
</dbReference>
<dbReference type="GO" id="GO:0005886">
    <property type="term" value="C:plasma membrane"/>
    <property type="evidence" value="ECO:0000314"/>
    <property type="project" value="UniProtKB"/>
</dbReference>
<dbReference type="GO" id="GO:0002102">
    <property type="term" value="C:podosome"/>
    <property type="evidence" value="ECO:0000314"/>
    <property type="project" value="UniProtKB"/>
</dbReference>
<dbReference type="GO" id="GO:0046872">
    <property type="term" value="F:metal ion binding"/>
    <property type="evidence" value="ECO:0007669"/>
    <property type="project" value="UniProtKB-KW"/>
</dbReference>
<dbReference type="GO" id="GO:0003712">
    <property type="term" value="F:transcription coregulator activity"/>
    <property type="evidence" value="ECO:0000314"/>
    <property type="project" value="UniProtKB"/>
</dbReference>
<dbReference type="GO" id="GO:0007155">
    <property type="term" value="P:cell adhesion"/>
    <property type="evidence" value="ECO:0000303"/>
    <property type="project" value="ProtInc"/>
</dbReference>
<dbReference type="GO" id="GO:0043542">
    <property type="term" value="P:endothelial cell migration"/>
    <property type="evidence" value="ECO:0000318"/>
    <property type="project" value="GO_Central"/>
</dbReference>
<dbReference type="GO" id="GO:0050859">
    <property type="term" value="P:negative regulation of B cell receptor signaling pathway"/>
    <property type="evidence" value="ECO:0000314"/>
    <property type="project" value="UniProtKB"/>
</dbReference>
<dbReference type="GO" id="GO:0007162">
    <property type="term" value="P:negative regulation of cell adhesion"/>
    <property type="evidence" value="ECO:0000314"/>
    <property type="project" value="UniProtKB"/>
</dbReference>
<dbReference type="GO" id="GO:0065003">
    <property type="term" value="P:protein-containing complex assembly"/>
    <property type="evidence" value="ECO:0000304"/>
    <property type="project" value="ProtInc"/>
</dbReference>
<dbReference type="GO" id="GO:0033628">
    <property type="term" value="P:regulation of cell adhesion mediated by integrin"/>
    <property type="evidence" value="ECO:0007669"/>
    <property type="project" value="Ensembl"/>
</dbReference>
<dbReference type="GO" id="GO:0007165">
    <property type="term" value="P:signal transduction"/>
    <property type="evidence" value="ECO:0000304"/>
    <property type="project" value="ProtInc"/>
</dbReference>
<dbReference type="GO" id="GO:0034446">
    <property type="term" value="P:substrate adhesion-dependent cell spreading"/>
    <property type="evidence" value="ECO:0000318"/>
    <property type="project" value="GO_Central"/>
</dbReference>
<dbReference type="GO" id="GO:0007179">
    <property type="term" value="P:transforming growth factor beta receptor signaling pathway"/>
    <property type="evidence" value="ECO:0000318"/>
    <property type="project" value="GO_Central"/>
</dbReference>
<dbReference type="CDD" id="cd09406">
    <property type="entry name" value="LIM1_Leupaxin"/>
    <property type="match status" value="1"/>
</dbReference>
<dbReference type="CDD" id="cd09408">
    <property type="entry name" value="LIM2_Leupaxin"/>
    <property type="match status" value="1"/>
</dbReference>
<dbReference type="CDD" id="cd09410">
    <property type="entry name" value="LIM3_Leupaxin"/>
    <property type="match status" value="1"/>
</dbReference>
<dbReference type="CDD" id="cd09339">
    <property type="entry name" value="LIM4_Paxillin_like"/>
    <property type="match status" value="1"/>
</dbReference>
<dbReference type="FunFam" id="2.10.110.10:FF:000008">
    <property type="entry name" value="Paxillin isoform 1"/>
    <property type="match status" value="1"/>
</dbReference>
<dbReference type="FunFam" id="2.10.110.10:FF:000009">
    <property type="entry name" value="Paxillin isoform 1"/>
    <property type="match status" value="1"/>
</dbReference>
<dbReference type="FunFam" id="2.10.110.10:FF:000012">
    <property type="entry name" value="Paxillin isoform 1"/>
    <property type="match status" value="1"/>
</dbReference>
<dbReference type="FunFam" id="2.10.110.10:FF:000018">
    <property type="entry name" value="Paxillin isoform 1"/>
    <property type="match status" value="1"/>
</dbReference>
<dbReference type="Gene3D" id="2.10.110.10">
    <property type="entry name" value="Cysteine Rich Protein"/>
    <property type="match status" value="4"/>
</dbReference>
<dbReference type="InterPro" id="IPR017305">
    <property type="entry name" value="Tgfb1i1/Leupaxin/TGFB1I1"/>
</dbReference>
<dbReference type="InterPro" id="IPR001781">
    <property type="entry name" value="Znf_LIM"/>
</dbReference>
<dbReference type="PANTHER" id="PTHR24216:SF23">
    <property type="entry name" value="LEUPAXIN"/>
    <property type="match status" value="1"/>
</dbReference>
<dbReference type="PANTHER" id="PTHR24216">
    <property type="entry name" value="PAXILLIN-RELATED"/>
    <property type="match status" value="1"/>
</dbReference>
<dbReference type="Pfam" id="PF00412">
    <property type="entry name" value="LIM"/>
    <property type="match status" value="4"/>
</dbReference>
<dbReference type="PIRSF" id="PIRSF037881">
    <property type="entry name" value="Leupaxin"/>
    <property type="match status" value="1"/>
</dbReference>
<dbReference type="SMART" id="SM00132">
    <property type="entry name" value="LIM"/>
    <property type="match status" value="4"/>
</dbReference>
<dbReference type="SUPFAM" id="SSF57716">
    <property type="entry name" value="Glucocorticoid receptor-like (DNA-binding domain)"/>
    <property type="match status" value="5"/>
</dbReference>
<dbReference type="PROSITE" id="PS00478">
    <property type="entry name" value="LIM_DOMAIN_1"/>
    <property type="match status" value="4"/>
</dbReference>
<dbReference type="PROSITE" id="PS50023">
    <property type="entry name" value="LIM_DOMAIN_2"/>
    <property type="match status" value="4"/>
</dbReference>
<feature type="chain" id="PRO_0000075836" description="Leupaxin">
    <location>
        <begin position="1"/>
        <end position="386"/>
    </location>
</feature>
<feature type="domain" description="LIM zinc-binding 1" evidence="3">
    <location>
        <begin position="150"/>
        <end position="208"/>
    </location>
</feature>
<feature type="domain" description="LIM zinc-binding 2" evidence="3">
    <location>
        <begin position="209"/>
        <end position="267"/>
    </location>
</feature>
<feature type="domain" description="LIM zinc-binding 3" evidence="3">
    <location>
        <begin position="268"/>
        <end position="326"/>
    </location>
</feature>
<feature type="domain" description="LIM zinc-binding 4" evidence="3">
    <location>
        <begin position="327"/>
        <end position="386"/>
    </location>
</feature>
<feature type="region of interest" description="Disordered" evidence="4">
    <location>
        <begin position="13"/>
        <end position="41"/>
    </location>
</feature>
<feature type="short sequence motif" description="LD motif 1">
    <location>
        <begin position="3"/>
        <end position="15"/>
    </location>
</feature>
<feature type="short sequence motif" description="LD motif 2">
    <location>
        <begin position="70"/>
        <end position="82"/>
    </location>
</feature>
<feature type="short sequence motif" description="LD motif 3">
    <location>
        <begin position="92"/>
        <end position="103"/>
    </location>
</feature>
<feature type="modified residue" description="N-acetylmethionine" evidence="16 18">
    <location>
        <position position="1"/>
    </location>
</feature>
<feature type="modified residue" description="Phosphoserine" evidence="15">
    <location>
        <position position="19"/>
    </location>
</feature>
<feature type="modified residue" description="Phosphotyrosine" evidence="11">
    <location>
        <position position="22"/>
    </location>
</feature>
<feature type="modified residue" description="Phosphoserine" evidence="2">
    <location>
        <position position="54"/>
    </location>
</feature>
<feature type="modified residue" description="Phosphotyrosine" evidence="11">
    <location>
        <position position="62"/>
    </location>
</feature>
<feature type="modified residue" description="Phosphotyrosine; by LYN" evidence="8 11">
    <location>
        <position position="72"/>
    </location>
</feature>
<feature type="modified residue" description="Phosphoserine" evidence="17">
    <location>
        <position position="81"/>
    </location>
</feature>
<feature type="splice variant" id="VSP_042655" description="In isoform 2." evidence="13">
    <original>MEEL</original>
    <variation>MSTLLISSS</variation>
    <location>
        <begin position="1"/>
        <end position="4"/>
    </location>
</feature>
<feature type="sequence variant" id="VAR_050152" description="In dbSNP:rs12271558.">
    <original>P</original>
    <variation>T</variation>
    <location>
        <position position="148"/>
    </location>
</feature>
<feature type="sequence conflict" description="In Ref. 3; CAG38768." evidence="14" ref="3">
    <original>E</original>
    <variation>D</variation>
    <location>
        <position position="2"/>
    </location>
</feature>
<feature type="sequence conflict" description="In Ref. 4; BAD96885." evidence="14" ref="4">
    <original>S</original>
    <variation>T</variation>
    <location>
        <position position="14"/>
    </location>
</feature>
<feature type="sequence conflict" description="In Ref. 3; CAG38768." evidence="14" ref="3">
    <original>L</original>
    <variation>M</variation>
    <location>
        <position position="100"/>
    </location>
</feature>
<feature type="helix" evidence="20">
    <location>
        <begin position="2"/>
        <end position="14"/>
    </location>
</feature>
<feature type="helix" evidence="21">
    <location>
        <begin position="88"/>
        <end position="98"/>
    </location>
</feature>
<feature type="turn" evidence="19">
    <location>
        <begin position="271"/>
        <end position="273"/>
    </location>
</feature>
<feature type="strand" evidence="19">
    <location>
        <begin position="282"/>
        <end position="284"/>
    </location>
</feature>
<feature type="strand" evidence="19">
    <location>
        <begin position="287"/>
        <end position="289"/>
    </location>
</feature>
<feature type="turn" evidence="19">
    <location>
        <begin position="291"/>
        <end position="293"/>
    </location>
</feature>
<feature type="strand" evidence="19">
    <location>
        <begin position="297"/>
        <end position="299"/>
    </location>
</feature>
<feature type="strand" evidence="19">
    <location>
        <begin position="309"/>
        <end position="313"/>
    </location>
</feature>
<feature type="helix" evidence="19">
    <location>
        <begin position="318"/>
        <end position="325"/>
    </location>
</feature>
<name>LPXN_HUMAN</name>
<proteinExistence type="evidence at protein level"/>
<protein>
    <recommendedName>
        <fullName>Leupaxin</fullName>
    </recommendedName>
</protein>
<organism>
    <name type="scientific">Homo sapiens</name>
    <name type="common">Human</name>
    <dbReference type="NCBI Taxonomy" id="9606"/>
    <lineage>
        <taxon>Eukaryota</taxon>
        <taxon>Metazoa</taxon>
        <taxon>Chordata</taxon>
        <taxon>Craniata</taxon>
        <taxon>Vertebrata</taxon>
        <taxon>Euteleostomi</taxon>
        <taxon>Mammalia</taxon>
        <taxon>Eutheria</taxon>
        <taxon>Euarchontoglires</taxon>
        <taxon>Primates</taxon>
        <taxon>Haplorrhini</taxon>
        <taxon>Catarrhini</taxon>
        <taxon>Hominidae</taxon>
        <taxon>Homo</taxon>
    </lineage>
</organism>
<reference key="1">
    <citation type="journal article" date="1998" name="J. Biol. Chem.">
        <title>Leupaxin is a novel LIM domain protein that forms a complex with PYK2.</title>
        <authorList>
            <person name="Lipsky B.P."/>
            <person name="Beals C.R."/>
            <person name="Staunton D.E."/>
        </authorList>
    </citation>
    <scope>NUCLEOTIDE SEQUENCE [MRNA] (ISOFORM 1)</scope>
    <scope>INTERACTION WITH PTK2B/PYK2</scope>
    <scope>CHARACTERIZATION</scope>
    <source>
        <tissue>Spleen</tissue>
    </source>
</reference>
<reference key="2">
    <citation type="journal article" date="2004" name="Nat. Genet.">
        <title>Complete sequencing and characterization of 21,243 full-length human cDNAs.</title>
        <authorList>
            <person name="Ota T."/>
            <person name="Suzuki Y."/>
            <person name="Nishikawa T."/>
            <person name="Otsuki T."/>
            <person name="Sugiyama T."/>
            <person name="Irie R."/>
            <person name="Wakamatsu A."/>
            <person name="Hayashi K."/>
            <person name="Sato H."/>
            <person name="Nagai K."/>
            <person name="Kimura K."/>
            <person name="Makita H."/>
            <person name="Sekine M."/>
            <person name="Obayashi M."/>
            <person name="Nishi T."/>
            <person name="Shibahara T."/>
            <person name="Tanaka T."/>
            <person name="Ishii S."/>
            <person name="Yamamoto J."/>
            <person name="Saito K."/>
            <person name="Kawai Y."/>
            <person name="Isono Y."/>
            <person name="Nakamura Y."/>
            <person name="Nagahari K."/>
            <person name="Murakami K."/>
            <person name="Yasuda T."/>
            <person name="Iwayanagi T."/>
            <person name="Wagatsuma M."/>
            <person name="Shiratori A."/>
            <person name="Sudo H."/>
            <person name="Hosoiri T."/>
            <person name="Kaku Y."/>
            <person name="Kodaira H."/>
            <person name="Kondo H."/>
            <person name="Sugawara M."/>
            <person name="Takahashi M."/>
            <person name="Kanda K."/>
            <person name="Yokoi T."/>
            <person name="Furuya T."/>
            <person name="Kikkawa E."/>
            <person name="Omura Y."/>
            <person name="Abe K."/>
            <person name="Kamihara K."/>
            <person name="Katsuta N."/>
            <person name="Sato K."/>
            <person name="Tanikawa M."/>
            <person name="Yamazaki M."/>
            <person name="Ninomiya K."/>
            <person name="Ishibashi T."/>
            <person name="Yamashita H."/>
            <person name="Murakawa K."/>
            <person name="Fujimori K."/>
            <person name="Tanai H."/>
            <person name="Kimata M."/>
            <person name="Watanabe M."/>
            <person name="Hiraoka S."/>
            <person name="Chiba Y."/>
            <person name="Ishida S."/>
            <person name="Ono Y."/>
            <person name="Takiguchi S."/>
            <person name="Watanabe S."/>
            <person name="Yosida M."/>
            <person name="Hotuta T."/>
            <person name="Kusano J."/>
            <person name="Kanehori K."/>
            <person name="Takahashi-Fujii A."/>
            <person name="Hara H."/>
            <person name="Tanase T.-O."/>
            <person name="Nomura Y."/>
            <person name="Togiya S."/>
            <person name="Komai F."/>
            <person name="Hara R."/>
            <person name="Takeuchi K."/>
            <person name="Arita M."/>
            <person name="Imose N."/>
            <person name="Musashino K."/>
            <person name="Yuuki H."/>
            <person name="Oshima A."/>
            <person name="Sasaki N."/>
            <person name="Aotsuka S."/>
            <person name="Yoshikawa Y."/>
            <person name="Matsunawa H."/>
            <person name="Ichihara T."/>
            <person name="Shiohata N."/>
            <person name="Sano S."/>
            <person name="Moriya S."/>
            <person name="Momiyama H."/>
            <person name="Satoh N."/>
            <person name="Takami S."/>
            <person name="Terashima Y."/>
            <person name="Suzuki O."/>
            <person name="Nakagawa S."/>
            <person name="Senoh A."/>
            <person name="Mizoguchi H."/>
            <person name="Goto Y."/>
            <person name="Shimizu F."/>
            <person name="Wakebe H."/>
            <person name="Hishigaki H."/>
            <person name="Watanabe T."/>
            <person name="Sugiyama A."/>
            <person name="Takemoto M."/>
            <person name="Kawakami B."/>
            <person name="Yamazaki M."/>
            <person name="Watanabe K."/>
            <person name="Kumagai A."/>
            <person name="Itakura S."/>
            <person name="Fukuzumi Y."/>
            <person name="Fujimori Y."/>
            <person name="Komiyama M."/>
            <person name="Tashiro H."/>
            <person name="Tanigami A."/>
            <person name="Fujiwara T."/>
            <person name="Ono T."/>
            <person name="Yamada K."/>
            <person name="Fujii Y."/>
            <person name="Ozaki K."/>
            <person name="Hirao M."/>
            <person name="Ohmori Y."/>
            <person name="Kawabata A."/>
            <person name="Hikiji T."/>
            <person name="Kobatake N."/>
            <person name="Inagaki H."/>
            <person name="Ikema Y."/>
            <person name="Okamoto S."/>
            <person name="Okitani R."/>
            <person name="Kawakami T."/>
            <person name="Noguchi S."/>
            <person name="Itoh T."/>
            <person name="Shigeta K."/>
            <person name="Senba T."/>
            <person name="Matsumura K."/>
            <person name="Nakajima Y."/>
            <person name="Mizuno T."/>
            <person name="Morinaga M."/>
            <person name="Sasaki M."/>
            <person name="Togashi T."/>
            <person name="Oyama M."/>
            <person name="Hata H."/>
            <person name="Watanabe M."/>
            <person name="Komatsu T."/>
            <person name="Mizushima-Sugano J."/>
            <person name="Satoh T."/>
            <person name="Shirai Y."/>
            <person name="Takahashi Y."/>
            <person name="Nakagawa K."/>
            <person name="Okumura K."/>
            <person name="Nagase T."/>
            <person name="Nomura N."/>
            <person name="Kikuchi H."/>
            <person name="Masuho Y."/>
            <person name="Yamashita R."/>
            <person name="Nakai K."/>
            <person name="Yada T."/>
            <person name="Nakamura Y."/>
            <person name="Ohara O."/>
            <person name="Isogai T."/>
            <person name="Sugano S."/>
        </authorList>
    </citation>
    <scope>NUCLEOTIDE SEQUENCE [LARGE SCALE MRNA] (ISOFORMS 1 AND 2)</scope>
    <source>
        <tissue>Small intestine</tissue>
        <tissue>Spleen</tissue>
    </source>
</reference>
<reference key="3">
    <citation type="submission" date="2004-06" db="EMBL/GenBank/DDBJ databases">
        <title>Cloning of human full open reading frames in Gateway(TM) system entry vector (pDONR201).</title>
        <authorList>
            <person name="Ebert L."/>
            <person name="Schick M."/>
            <person name="Neubert P."/>
            <person name="Schatten R."/>
            <person name="Henze S."/>
            <person name="Korn B."/>
        </authorList>
    </citation>
    <scope>NUCLEOTIDE SEQUENCE [LARGE SCALE MRNA] (ISOFORM 1)</scope>
</reference>
<reference key="4">
    <citation type="submission" date="2005-04" db="EMBL/GenBank/DDBJ databases">
        <authorList>
            <person name="Suzuki Y."/>
            <person name="Sugano S."/>
            <person name="Totoki Y."/>
            <person name="Toyoda A."/>
            <person name="Takeda T."/>
            <person name="Sakaki Y."/>
            <person name="Tanaka A."/>
            <person name="Yokoyama S."/>
        </authorList>
    </citation>
    <scope>NUCLEOTIDE SEQUENCE [LARGE SCALE MRNA] (ISOFORM 1)</scope>
    <source>
        <tissue>Lung</tissue>
    </source>
</reference>
<reference key="5">
    <citation type="journal article" date="2006" name="Nature">
        <title>Human chromosome 11 DNA sequence and analysis including novel gene identification.</title>
        <authorList>
            <person name="Taylor T.D."/>
            <person name="Noguchi H."/>
            <person name="Totoki Y."/>
            <person name="Toyoda A."/>
            <person name="Kuroki Y."/>
            <person name="Dewar K."/>
            <person name="Lloyd C."/>
            <person name="Itoh T."/>
            <person name="Takeda T."/>
            <person name="Kim D.-W."/>
            <person name="She X."/>
            <person name="Barlow K.F."/>
            <person name="Bloom T."/>
            <person name="Bruford E."/>
            <person name="Chang J.L."/>
            <person name="Cuomo C.A."/>
            <person name="Eichler E."/>
            <person name="FitzGerald M.G."/>
            <person name="Jaffe D.B."/>
            <person name="LaButti K."/>
            <person name="Nicol R."/>
            <person name="Park H.-S."/>
            <person name="Seaman C."/>
            <person name="Sougnez C."/>
            <person name="Yang X."/>
            <person name="Zimmer A.R."/>
            <person name="Zody M.C."/>
            <person name="Birren B.W."/>
            <person name="Nusbaum C."/>
            <person name="Fujiyama A."/>
            <person name="Hattori M."/>
            <person name="Rogers J."/>
            <person name="Lander E.S."/>
            <person name="Sakaki Y."/>
        </authorList>
    </citation>
    <scope>NUCLEOTIDE SEQUENCE [LARGE SCALE GENOMIC DNA]</scope>
</reference>
<reference key="6">
    <citation type="submission" date="2005-07" db="EMBL/GenBank/DDBJ databases">
        <authorList>
            <person name="Mural R.J."/>
            <person name="Istrail S."/>
            <person name="Sutton G.G."/>
            <person name="Florea L."/>
            <person name="Halpern A.L."/>
            <person name="Mobarry C.M."/>
            <person name="Lippert R."/>
            <person name="Walenz B."/>
            <person name="Shatkay H."/>
            <person name="Dew I."/>
            <person name="Miller J.R."/>
            <person name="Flanigan M.J."/>
            <person name="Edwards N.J."/>
            <person name="Bolanos R."/>
            <person name="Fasulo D."/>
            <person name="Halldorsson B.V."/>
            <person name="Hannenhalli S."/>
            <person name="Turner R."/>
            <person name="Yooseph S."/>
            <person name="Lu F."/>
            <person name="Nusskern D.R."/>
            <person name="Shue B.C."/>
            <person name="Zheng X.H."/>
            <person name="Zhong F."/>
            <person name="Delcher A.L."/>
            <person name="Huson D.H."/>
            <person name="Kravitz S.A."/>
            <person name="Mouchard L."/>
            <person name="Reinert K."/>
            <person name="Remington K.A."/>
            <person name="Clark A.G."/>
            <person name="Waterman M.S."/>
            <person name="Eichler E.E."/>
            <person name="Adams M.D."/>
            <person name="Hunkapiller M.W."/>
            <person name="Myers E.W."/>
            <person name="Venter J.C."/>
        </authorList>
    </citation>
    <scope>NUCLEOTIDE SEQUENCE [LARGE SCALE GENOMIC DNA]</scope>
</reference>
<reference key="7">
    <citation type="journal article" date="2004" name="Genome Res.">
        <title>The status, quality, and expansion of the NIH full-length cDNA project: the Mammalian Gene Collection (MGC).</title>
        <authorList>
            <consortium name="The MGC Project Team"/>
        </authorList>
    </citation>
    <scope>NUCLEOTIDE SEQUENCE [LARGE SCALE MRNA] (ISOFORM 1)</scope>
    <source>
        <tissue>B-cell</tissue>
    </source>
</reference>
<reference key="8">
    <citation type="journal article" date="1999" name="Nature">
        <title>Binding of paxillin to alpha4 integrins modifies integrin-dependent biological responses.</title>
        <authorList>
            <person name="Liu S."/>
            <person name="Thomas S.M."/>
            <person name="Woodside D.G."/>
            <person name="Rose D.M."/>
            <person name="Kiosses W.B."/>
            <person name="Pfaff M."/>
            <person name="Ginsberg M.H."/>
        </authorList>
    </citation>
    <scope>INTERACTION WITH ITGA4</scope>
</reference>
<reference key="9">
    <citation type="journal article" date="2003" name="J. Bone Miner. Res.">
        <title>Leupaxin is a critical adaptor protein in the adhesion zone of the osteoclast.</title>
        <authorList>
            <person name="Gupta A."/>
            <person name="Lee B.S."/>
            <person name="Khadeer M.A."/>
            <person name="Tang Z."/>
            <person name="Chellaiah M."/>
            <person name="Abu-Amer Y."/>
            <person name="Goldknopf J."/>
            <person name="Hruska K.A."/>
        </authorList>
    </citation>
    <scope>SUBCELLULAR LOCATION</scope>
    <scope>TISSUE SPECIFICITY</scope>
</reference>
<reference key="10">
    <citation type="journal article" date="2004" name="Anal. Chem.">
        <title>Robust phosphoproteomic profiling of tyrosine phosphorylation sites from human T cells using immobilized metal affinity chromatography and tandem mass spectrometry.</title>
        <authorList>
            <person name="Brill L.M."/>
            <person name="Salomon A.R."/>
            <person name="Ficarro S.B."/>
            <person name="Mukherji M."/>
            <person name="Stettler-Gill M."/>
            <person name="Peters E.C."/>
        </authorList>
    </citation>
    <scope>PHOSPHORYLATION [LARGE SCALE ANALYSIS] AT SER-19</scope>
    <scope>IDENTIFICATION BY MASS SPECTROMETRY [LARGE SCALE ANALYSIS]</scope>
    <source>
        <tissue>Leukemic T-cell</tissue>
    </source>
</reference>
<reference key="11">
    <citation type="journal article" date="2005" name="Nat. Biotechnol.">
        <title>Immunoaffinity profiling of tyrosine phosphorylation in cancer cells.</title>
        <authorList>
            <person name="Rush J."/>
            <person name="Moritz A."/>
            <person name="Lee K.A."/>
            <person name="Guo A."/>
            <person name="Goss V.L."/>
            <person name="Spek E.J."/>
            <person name="Zhang H."/>
            <person name="Zha X.-M."/>
            <person name="Polakiewicz R.D."/>
            <person name="Comb M.J."/>
        </authorList>
    </citation>
    <scope>IDENTIFICATION BY MASS SPECTROMETRY [LARGE SCALE ANALYSIS]</scope>
</reference>
<reference key="12">
    <citation type="journal article" date="2007" name="Am. J. Physiol.">
        <title>Interaction of Pyk2 and PTP-PEST with leupaxin in prostate cancer cells.</title>
        <authorList>
            <person name="Sahu S.N."/>
            <person name="Nunez S."/>
            <person name="Bai G."/>
            <person name="Gupta A."/>
        </authorList>
    </citation>
    <scope>INTERACTION WITH PTK2B/PYK2 AND PTPN12</scope>
    <scope>SUBCELLULAR LOCATION</scope>
</reference>
<reference key="13">
    <citation type="journal article" date="2007" name="J. Biol. Chem.">
        <title>Leupaxin negatively regulates B cell receptor signaling.</title>
        <authorList>
            <person name="Chew V."/>
            <person name="Lam K.P."/>
        </authorList>
    </citation>
    <scope>FUNCTION</scope>
    <scope>SUBCELLULAR LOCATION</scope>
    <scope>PHOSPHORYLATION AT TYR-72 BY LYN</scope>
    <scope>INTERACTION WITH LYN</scope>
</reference>
<reference key="14">
    <citation type="journal article" date="2008" name="Circ. Res.">
        <title>The LIM protein leupaxin is enriched in smooth muscle and functions as an serum response factor cofactor to induce smooth muscle cell gene transcription.</title>
        <authorList>
            <person name="Sundberg-Smith L.J."/>
            <person name="DiMichele L.A."/>
            <person name="Sayers R.L."/>
            <person name="Mack C.P."/>
            <person name="Taylor J.M."/>
        </authorList>
    </citation>
    <scope>FUNCTION</scope>
    <scope>SUBCELLULAR LOCATION</scope>
    <scope>TISSUE SPECIFICITY</scope>
    <scope>INTERACTION WITH PTK2/FAK AND SRF</scope>
</reference>
<reference key="15">
    <citation type="journal article" date="2008" name="Mol. Endocrinol.">
        <title>Leupaxin, a novel coactivator of the androgen receptor, is expressed in prostate cancer and plays a role in adhesion and invasion of prostate carcinoma cells.</title>
        <authorList>
            <person name="Kaulfuss S."/>
            <person name="Grzmil M."/>
            <person name="Hemmerlein B."/>
            <person name="Thelen P."/>
            <person name="Schweyer S."/>
            <person name="Neesen J."/>
            <person name="Bubendorf L."/>
            <person name="Glass A.G."/>
            <person name="Jarry H."/>
            <person name="Auber B."/>
            <person name="Burfeind P."/>
        </authorList>
    </citation>
    <scope>FUNCTION</scope>
    <scope>SUBCELLULAR LOCATION</scope>
    <scope>TISSUE SPECIFICITY</scope>
    <scope>INTERACTION WITH AR</scope>
</reference>
<reference key="16">
    <citation type="journal article" date="2009" name="Sci. Signal.">
        <title>Quantitative phosphoproteomic analysis of T cell receptor signaling reveals system-wide modulation of protein-protein interactions.</title>
        <authorList>
            <person name="Mayya V."/>
            <person name="Lundgren D.H."/>
            <person name="Hwang S.-I."/>
            <person name="Rezaul K."/>
            <person name="Wu L."/>
            <person name="Eng J.K."/>
            <person name="Rodionov V."/>
            <person name="Han D.K."/>
        </authorList>
    </citation>
    <scope>IDENTIFICATION BY MASS SPECTROMETRY [LARGE SCALE ANALYSIS]</scope>
    <source>
        <tissue>Leukemic T-cell</tissue>
    </source>
</reference>
<reference key="17">
    <citation type="journal article" date="2010" name="Cell Adh. Migr.">
        <title>Leupaxin is similar to paxillin in focal adhesion targeting and tyrosine phosphorylation but has distinct roles in cell adhesion and spreading.</title>
        <authorList>
            <person name="Chen P.W."/>
            <person name="Kroog G.S."/>
        </authorList>
    </citation>
    <scope>FUNCTION</scope>
    <scope>SUBCELLULAR LOCATION</scope>
    <scope>PHOSPHORYLATION AT TYR-22; TYR-62 AND TYR-72</scope>
</reference>
<reference key="18">
    <citation type="journal article" date="2011" name="BMC Syst. Biol.">
        <title>Initial characterization of the human central proteome.</title>
        <authorList>
            <person name="Burkard T.R."/>
            <person name="Planyavsky M."/>
            <person name="Kaupe I."/>
            <person name="Breitwieser F.P."/>
            <person name="Buerckstuemmer T."/>
            <person name="Bennett K.L."/>
            <person name="Superti-Furga G."/>
            <person name="Colinge J."/>
        </authorList>
    </citation>
    <scope>IDENTIFICATION BY MASS SPECTROMETRY [LARGE SCALE ANALYSIS]</scope>
</reference>
<reference key="19">
    <citation type="journal article" date="2012" name="Proc. Natl. Acad. Sci. U.S.A.">
        <title>N-terminal acetylome analyses and functional insights of the N-terminal acetyltransferase NatB.</title>
        <authorList>
            <person name="Van Damme P."/>
            <person name="Lasa M."/>
            <person name="Polevoda B."/>
            <person name="Gazquez C."/>
            <person name="Elosegui-Artola A."/>
            <person name="Kim D.S."/>
            <person name="De Juan-Pardo E."/>
            <person name="Demeyer K."/>
            <person name="Hole K."/>
            <person name="Larrea E."/>
            <person name="Timmerman E."/>
            <person name="Prieto J."/>
            <person name="Arnesen T."/>
            <person name="Sherman F."/>
            <person name="Gevaert K."/>
            <person name="Aldabe R."/>
        </authorList>
    </citation>
    <scope>ACETYLATION [LARGE SCALE ANALYSIS] AT MET-1</scope>
    <scope>IDENTIFICATION BY MASS SPECTROMETRY [LARGE SCALE ANALYSIS]</scope>
</reference>
<reference key="20">
    <citation type="journal article" date="2014" name="J. Proteomics">
        <title>An enzyme assisted RP-RPLC approach for in-depth analysis of human liver phosphoproteome.</title>
        <authorList>
            <person name="Bian Y."/>
            <person name="Song C."/>
            <person name="Cheng K."/>
            <person name="Dong M."/>
            <person name="Wang F."/>
            <person name="Huang J."/>
            <person name="Sun D."/>
            <person name="Wang L."/>
            <person name="Ye M."/>
            <person name="Zou H."/>
        </authorList>
    </citation>
    <scope>PHOSPHORYLATION [LARGE SCALE ANALYSIS] AT SER-81</scope>
    <scope>IDENTIFICATION BY MASS SPECTROMETRY [LARGE SCALE ANALYSIS]</scope>
    <source>
        <tissue>Liver</tissue>
    </source>
</reference>
<reference key="21">
    <citation type="journal article" date="2015" name="Proteomics">
        <title>N-terminome analysis of the human mitochondrial proteome.</title>
        <authorList>
            <person name="Vaca Jacome A.S."/>
            <person name="Rabilloud T."/>
            <person name="Schaeffer-Reiss C."/>
            <person name="Rompais M."/>
            <person name="Ayoub D."/>
            <person name="Lane L."/>
            <person name="Bairoch A."/>
            <person name="Van Dorsselaer A."/>
            <person name="Carapito C."/>
        </authorList>
    </citation>
    <scope>ACETYLATION [LARGE SCALE ANALYSIS] AT MET-1</scope>
    <scope>IDENTIFICATION BY MASS SPECTROMETRY [LARGE SCALE ANALYSIS]</scope>
</reference>
<reference key="22">
    <citation type="submission" date="2006-01" db="PDB data bank">
        <title>Solution structure of the LIM domain of human leupaxin.</title>
        <authorList>
            <consortium name="RIKEN structural genomics initiative (RSGI)"/>
        </authorList>
    </citation>
    <scope>STRUCTURE BY NMR OF 260-326</scope>
</reference>
<keyword id="KW-0002">3D-structure</keyword>
<keyword id="KW-0007">Acetylation</keyword>
<keyword id="KW-0010">Activator</keyword>
<keyword id="KW-0025">Alternative splicing</keyword>
<keyword id="KW-0130">Cell adhesion</keyword>
<keyword id="KW-0965">Cell junction</keyword>
<keyword id="KW-1003">Cell membrane</keyword>
<keyword id="KW-0966">Cell projection</keyword>
<keyword id="KW-0963">Cytoplasm</keyword>
<keyword id="KW-0440">LIM domain</keyword>
<keyword id="KW-0472">Membrane</keyword>
<keyword id="KW-0479">Metal-binding</keyword>
<keyword id="KW-0539">Nucleus</keyword>
<keyword id="KW-0597">Phosphoprotein</keyword>
<keyword id="KW-1267">Proteomics identification</keyword>
<keyword id="KW-1185">Reference proteome</keyword>
<keyword id="KW-0677">Repeat</keyword>
<keyword id="KW-0804">Transcription</keyword>
<keyword id="KW-0805">Transcription regulation</keyword>
<keyword id="KW-0862">Zinc</keyword>
<accession>O60711</accession>
<accession>B2R8B4</accession>
<accession>B4DV71</accession>
<accession>Q53FW6</accession>
<accession>Q6FI07</accession>